<organism>
    <name type="scientific">Shigella sonnei (strain Ss046)</name>
    <dbReference type="NCBI Taxonomy" id="300269"/>
    <lineage>
        <taxon>Bacteria</taxon>
        <taxon>Pseudomonadati</taxon>
        <taxon>Pseudomonadota</taxon>
        <taxon>Gammaproteobacteria</taxon>
        <taxon>Enterobacterales</taxon>
        <taxon>Enterobacteriaceae</taxon>
        <taxon>Shigella</taxon>
    </lineage>
</organism>
<evidence type="ECO:0000250" key="1">
    <source>
        <dbReference type="UniProtKB" id="P39301"/>
    </source>
</evidence>
<evidence type="ECO:0000305" key="2"/>
<dbReference type="EMBL" id="CP000038">
    <property type="status" value="NOT_ANNOTATED_CDS"/>
    <property type="molecule type" value="Genomic_DNA"/>
</dbReference>
<dbReference type="SMR" id="P0C184"/>
<dbReference type="Proteomes" id="UP000002529">
    <property type="component" value="Chromosome"/>
</dbReference>
<dbReference type="GO" id="GO:0005886">
    <property type="term" value="C:plasma membrane"/>
    <property type="evidence" value="ECO:0007669"/>
    <property type="project" value="UniProtKB-SubCell"/>
</dbReference>
<dbReference type="GO" id="GO:0009401">
    <property type="term" value="P:phosphoenolpyruvate-dependent sugar phosphotransferase system"/>
    <property type="evidence" value="ECO:0007669"/>
    <property type="project" value="UniProtKB-KW"/>
</dbReference>
<dbReference type="InterPro" id="IPR051562">
    <property type="entry name" value="Ascorbate-PTS_EIIC"/>
</dbReference>
<dbReference type="InterPro" id="IPR004703">
    <property type="entry name" value="PTS_sugar-sp_permease"/>
</dbReference>
<dbReference type="NCBIfam" id="NF006919">
    <property type="entry name" value="PRK09410.1-1"/>
    <property type="match status" value="1"/>
</dbReference>
<dbReference type="PANTHER" id="PTHR33843">
    <property type="entry name" value="ASCORBATE-SPECIFIC PTS SYSTEM EIIC COMPONENT"/>
    <property type="match status" value="1"/>
</dbReference>
<dbReference type="PANTHER" id="PTHR33843:SF4">
    <property type="entry name" value="ASCORBATE-SPECIFIC PTS SYSTEM EIIC COMPONENT"/>
    <property type="match status" value="1"/>
</dbReference>
<dbReference type="Pfam" id="PF03611">
    <property type="entry name" value="EIIC-GAT"/>
    <property type="match status" value="1"/>
</dbReference>
<protein>
    <recommendedName>
        <fullName evidence="1">Ascorbate-specific PTS system EIIC component</fullName>
    </recommendedName>
    <alternativeName>
        <fullName evidence="1">Ascorbate-specific permease IIC component UlaA</fullName>
    </alternativeName>
</protein>
<comment type="function">
    <text evidence="1">The phosphoenolpyruvate-dependent sugar phosphotransferase system (sugar PTS), a major carbohydrate active transport system, catalyzes the phosphorylation of incoming sugar substrates concomitantly with their translocation across the cell membrane. The enzyme II UlaABC PTS system is involved in ascorbate transport.</text>
</comment>
<comment type="subunit">
    <text evidence="1">Homodimer.</text>
</comment>
<comment type="subcellular location">
    <subcellularLocation>
        <location evidence="1">Cell inner membrane</location>
        <topology evidence="1">Multi-pass membrane protein</topology>
    </subcellularLocation>
</comment>
<comment type="induction">
    <text evidence="1">Induced by L-ascorbate. Repressed by UlaR.</text>
</comment>
<comment type="domain">
    <text evidence="1">In classical PTS systems, the PTS EIIC type-2 domain forms the translocation channel and contains the specific substrate-binding site. UlaA does not exhibit the topological features of any recognized enzyme IIC.</text>
</comment>
<comment type="similarity">
    <text evidence="2">Belongs to the UlaA family.</text>
</comment>
<comment type="caution">
    <text evidence="2">Could be the product of a pseudogene.</text>
</comment>
<comment type="sequence caution" evidence="2">
    <conflict type="frameshift">
        <sequence resource="EMBL" id="CP000038"/>
    </conflict>
</comment>
<proteinExistence type="uncertain"/>
<sequence>MEILYNIFTVFFNQVMTNAPLLLGIVTCLGYILLRKSVSVIIKGTIKTIIGFMLLQAGSGILTSTFKPVVAKMSEVYGINGAISDTYASMMATIDRMGDAYSWVGYAVLLALALNICYVLLRRITGIRTIMLTGHIMFQQAGLIAVTLFIFGYSMWTTIICTAILVSLYWGITSNMMYKPTQEVTDGCGFSIGHQQQFASWTAYKVAPFLGKKEESVEDLKLPGWLNIFHDNIVSTAIVMTIFFGAILLSFGIDTVQAMAGKVHWTVYILQTGFSFAVAIFIITQGVRMFVAELSEAFNGISQRLIPGAVLAIDCAAIYSFAPNAVVWGFMWGTIGQLIAVGILVACGSSSLIIPGFIPMFFSNATIGVFANHFGGWRAALKICLVMGMIEIFGCVWAVKLTGMSAWMGMADWSILAPPMMQGFFSIGIAFMAVIIVIALAYMFFAGRALRAEEDAEKQLAEQSA</sequence>
<feature type="chain" id="PRO_0000230664" description="Ascorbate-specific PTS system EIIC component">
    <location>
        <begin position="1"/>
        <end position="465"/>
    </location>
</feature>
<feature type="transmembrane region" description="Helical" evidence="1">
    <location>
        <begin position="14"/>
        <end position="34"/>
    </location>
</feature>
<feature type="transmembrane region" description="Helical" evidence="1">
    <location>
        <begin position="38"/>
        <end position="58"/>
    </location>
</feature>
<feature type="transmembrane region" description="Helical" evidence="1">
    <location>
        <begin position="101"/>
        <end position="121"/>
    </location>
</feature>
<feature type="transmembrane region" description="Helical" evidence="1">
    <location>
        <begin position="141"/>
        <end position="161"/>
    </location>
</feature>
<feature type="transmembrane region" description="Helical" evidence="1">
    <location>
        <begin position="233"/>
        <end position="253"/>
    </location>
</feature>
<feature type="transmembrane region" description="Helical" evidence="1">
    <location>
        <begin position="263"/>
        <end position="283"/>
    </location>
</feature>
<feature type="transmembrane region" description="Helical" evidence="1">
    <location>
        <begin position="316"/>
        <end position="336"/>
    </location>
</feature>
<feature type="transmembrane region" description="Helical" evidence="1">
    <location>
        <begin position="338"/>
        <end position="358"/>
    </location>
</feature>
<feature type="transmembrane region" description="Helical" evidence="1">
    <location>
        <begin position="379"/>
        <end position="399"/>
    </location>
</feature>
<feature type="transmembrane region" description="Helical" evidence="1">
    <location>
        <begin position="427"/>
        <end position="447"/>
    </location>
</feature>
<feature type="binding site" evidence="1">
    <location>
        <begin position="86"/>
        <end position="87"/>
    </location>
    <ligand>
        <name>L-ascorbate</name>
        <dbReference type="ChEBI" id="CHEBI:38290"/>
    </ligand>
</feature>
<feature type="binding site" evidence="1">
    <location>
        <begin position="135"/>
        <end position="139"/>
    </location>
    <ligand>
        <name>L-ascorbate</name>
        <dbReference type="ChEBI" id="CHEBI:38290"/>
    </ligand>
</feature>
<feature type="binding site" evidence="1">
    <location>
        <begin position="194"/>
        <end position="195"/>
    </location>
    <ligand>
        <name>L-ascorbate</name>
        <dbReference type="ChEBI" id="CHEBI:38290"/>
    </ligand>
</feature>
<feature type="binding site" evidence="1">
    <location>
        <position position="314"/>
    </location>
    <ligand>
        <name>L-ascorbate</name>
        <dbReference type="ChEBI" id="CHEBI:38290"/>
    </ligand>
</feature>
<keyword id="KW-0997">Cell inner membrane</keyword>
<keyword id="KW-1003">Cell membrane</keyword>
<keyword id="KW-0472">Membrane</keyword>
<keyword id="KW-0598">Phosphotransferase system</keyword>
<keyword id="KW-1185">Reference proteome</keyword>
<keyword id="KW-0762">Sugar transport</keyword>
<keyword id="KW-0812">Transmembrane</keyword>
<keyword id="KW-1133">Transmembrane helix</keyword>
<keyword id="KW-0813">Transport</keyword>
<reference key="1">
    <citation type="journal article" date="2005" name="Nucleic Acids Res.">
        <title>Genome dynamics and diversity of Shigella species, the etiologic agents of bacillary dysentery.</title>
        <authorList>
            <person name="Yang F."/>
            <person name="Yang J."/>
            <person name="Zhang X."/>
            <person name="Chen L."/>
            <person name="Jiang Y."/>
            <person name="Yan Y."/>
            <person name="Tang X."/>
            <person name="Wang J."/>
            <person name="Xiong Z."/>
            <person name="Dong J."/>
            <person name="Xue Y."/>
            <person name="Zhu Y."/>
            <person name="Xu X."/>
            <person name="Sun L."/>
            <person name="Chen S."/>
            <person name="Nie H."/>
            <person name="Peng J."/>
            <person name="Xu J."/>
            <person name="Wang Y."/>
            <person name="Yuan Z."/>
            <person name="Wen Y."/>
            <person name="Yao Z."/>
            <person name="Shen Y."/>
            <person name="Qiang B."/>
            <person name="Hou Y."/>
            <person name="Yu J."/>
            <person name="Jin Q."/>
        </authorList>
    </citation>
    <scope>NUCLEOTIDE SEQUENCE [LARGE SCALE GENOMIC DNA]</scope>
    <source>
        <strain>Ss046</strain>
    </source>
</reference>
<name>ULAA_SHISS</name>
<accession>P0C184</accession>
<gene>
    <name type="primary">ulaA</name>
    <name type="ordered locus">SSON_4375</name>
</gene>